<reference evidence="9" key="1">
    <citation type="journal article" date="2004" name="Nature">
        <title>Genome sequence of the Brown Norway rat yields insights into mammalian evolution.</title>
        <authorList>
            <person name="Gibbs R.A."/>
            <person name="Weinstock G.M."/>
            <person name="Metzker M.L."/>
            <person name="Muzny D.M."/>
            <person name="Sodergren E.J."/>
            <person name="Scherer S."/>
            <person name="Scott G."/>
            <person name="Steffen D."/>
            <person name="Worley K.C."/>
            <person name="Burch P.E."/>
            <person name="Okwuonu G."/>
            <person name="Hines S."/>
            <person name="Lewis L."/>
            <person name="Deramo C."/>
            <person name="Delgado O."/>
            <person name="Dugan-Rocha S."/>
            <person name="Miner G."/>
            <person name="Morgan M."/>
            <person name="Hawes A."/>
            <person name="Gill R."/>
            <person name="Holt R.A."/>
            <person name="Adams M.D."/>
            <person name="Amanatides P.G."/>
            <person name="Baden-Tillson H."/>
            <person name="Barnstead M."/>
            <person name="Chin S."/>
            <person name="Evans C.A."/>
            <person name="Ferriera S."/>
            <person name="Fosler C."/>
            <person name="Glodek A."/>
            <person name="Gu Z."/>
            <person name="Jennings D."/>
            <person name="Kraft C.L."/>
            <person name="Nguyen T."/>
            <person name="Pfannkoch C.M."/>
            <person name="Sitter C."/>
            <person name="Sutton G.G."/>
            <person name="Venter J.C."/>
            <person name="Woodage T."/>
            <person name="Smith D."/>
            <person name="Lee H.-M."/>
            <person name="Gustafson E."/>
            <person name="Cahill P."/>
            <person name="Kana A."/>
            <person name="Doucette-Stamm L."/>
            <person name="Weinstock K."/>
            <person name="Fechtel K."/>
            <person name="Weiss R.B."/>
            <person name="Dunn D.M."/>
            <person name="Green E.D."/>
            <person name="Blakesley R.W."/>
            <person name="Bouffard G.G."/>
            <person name="De Jong P.J."/>
            <person name="Osoegawa K."/>
            <person name="Zhu B."/>
            <person name="Marra M."/>
            <person name="Schein J."/>
            <person name="Bosdet I."/>
            <person name="Fjell C."/>
            <person name="Jones S."/>
            <person name="Krzywinski M."/>
            <person name="Mathewson C."/>
            <person name="Siddiqui A."/>
            <person name="Wye N."/>
            <person name="McPherson J."/>
            <person name="Zhao S."/>
            <person name="Fraser C.M."/>
            <person name="Shetty J."/>
            <person name="Shatsman S."/>
            <person name="Geer K."/>
            <person name="Chen Y."/>
            <person name="Abramzon S."/>
            <person name="Nierman W.C."/>
            <person name="Havlak P.H."/>
            <person name="Chen R."/>
            <person name="Durbin K.J."/>
            <person name="Egan A."/>
            <person name="Ren Y."/>
            <person name="Song X.-Z."/>
            <person name="Li B."/>
            <person name="Liu Y."/>
            <person name="Qin X."/>
            <person name="Cawley S."/>
            <person name="Cooney A.J."/>
            <person name="D'Souza L.M."/>
            <person name="Martin K."/>
            <person name="Wu J.Q."/>
            <person name="Gonzalez-Garay M.L."/>
            <person name="Jackson A.R."/>
            <person name="Kalafus K.J."/>
            <person name="McLeod M.P."/>
            <person name="Milosavljevic A."/>
            <person name="Virk D."/>
            <person name="Volkov A."/>
            <person name="Wheeler D.A."/>
            <person name="Zhang Z."/>
            <person name="Bailey J.A."/>
            <person name="Eichler E.E."/>
            <person name="Tuzun E."/>
            <person name="Birney E."/>
            <person name="Mongin E."/>
            <person name="Ureta-Vidal A."/>
            <person name="Woodwark C."/>
            <person name="Zdobnov E."/>
            <person name="Bork P."/>
            <person name="Suyama M."/>
            <person name="Torrents D."/>
            <person name="Alexandersson M."/>
            <person name="Trask B.J."/>
            <person name="Young J.M."/>
            <person name="Huang H."/>
            <person name="Wang H."/>
            <person name="Xing H."/>
            <person name="Daniels S."/>
            <person name="Gietzen D."/>
            <person name="Schmidt J."/>
            <person name="Stevens K."/>
            <person name="Vitt U."/>
            <person name="Wingrove J."/>
            <person name="Camara F."/>
            <person name="Mar Alba M."/>
            <person name="Abril J.F."/>
            <person name="Guigo R."/>
            <person name="Smit A."/>
            <person name="Dubchak I."/>
            <person name="Rubin E.M."/>
            <person name="Couronne O."/>
            <person name="Poliakov A."/>
            <person name="Huebner N."/>
            <person name="Ganten D."/>
            <person name="Goesele C."/>
            <person name="Hummel O."/>
            <person name="Kreitler T."/>
            <person name="Lee Y.-A."/>
            <person name="Monti J."/>
            <person name="Schulz H."/>
            <person name="Zimdahl H."/>
            <person name="Himmelbauer H."/>
            <person name="Lehrach H."/>
            <person name="Jacob H.J."/>
            <person name="Bromberg S."/>
            <person name="Gullings-Handley J."/>
            <person name="Jensen-Seaman M.I."/>
            <person name="Kwitek A.E."/>
            <person name="Lazar J."/>
            <person name="Pasko D."/>
            <person name="Tonellato P.J."/>
            <person name="Twigger S."/>
            <person name="Ponting C.P."/>
            <person name="Duarte J.M."/>
            <person name="Rice S."/>
            <person name="Goodstadt L."/>
            <person name="Beatson S.A."/>
            <person name="Emes R.D."/>
            <person name="Winter E.E."/>
            <person name="Webber C."/>
            <person name="Brandt P."/>
            <person name="Nyakatura G."/>
            <person name="Adetobi M."/>
            <person name="Chiaromonte F."/>
            <person name="Elnitski L."/>
            <person name="Eswara P."/>
            <person name="Hardison R.C."/>
            <person name="Hou M."/>
            <person name="Kolbe D."/>
            <person name="Makova K."/>
            <person name="Miller W."/>
            <person name="Nekrutenko A."/>
            <person name="Riemer C."/>
            <person name="Schwartz S."/>
            <person name="Taylor J."/>
            <person name="Yang S."/>
            <person name="Zhang Y."/>
            <person name="Lindpaintner K."/>
            <person name="Andrews T.D."/>
            <person name="Caccamo M."/>
            <person name="Clamp M."/>
            <person name="Clarke L."/>
            <person name="Curwen V."/>
            <person name="Durbin R.M."/>
            <person name="Eyras E."/>
            <person name="Searle S.M."/>
            <person name="Cooper G.M."/>
            <person name="Batzoglou S."/>
            <person name="Brudno M."/>
            <person name="Sidow A."/>
            <person name="Stone E.A."/>
            <person name="Payseur B.A."/>
            <person name="Bourque G."/>
            <person name="Lopez-Otin C."/>
            <person name="Puente X.S."/>
            <person name="Chakrabarti K."/>
            <person name="Chatterji S."/>
            <person name="Dewey C."/>
            <person name="Pachter L."/>
            <person name="Bray N."/>
            <person name="Yap V.B."/>
            <person name="Caspi A."/>
            <person name="Tesler G."/>
            <person name="Pevzner P.A."/>
            <person name="Haussler D."/>
            <person name="Roskin K.M."/>
            <person name="Baertsch R."/>
            <person name="Clawson H."/>
            <person name="Furey T.S."/>
            <person name="Hinrichs A.S."/>
            <person name="Karolchik D."/>
            <person name="Kent W.J."/>
            <person name="Rosenbloom K.R."/>
            <person name="Trumbower H."/>
            <person name="Weirauch M."/>
            <person name="Cooper D.N."/>
            <person name="Stenson P.D."/>
            <person name="Ma B."/>
            <person name="Brent M."/>
            <person name="Arumugam M."/>
            <person name="Shteynberg D."/>
            <person name="Copley R.R."/>
            <person name="Taylor M.S."/>
            <person name="Riethman H."/>
            <person name="Mudunuri U."/>
            <person name="Peterson J."/>
            <person name="Guyer M."/>
            <person name="Felsenfeld A."/>
            <person name="Old S."/>
            <person name="Mockrin S."/>
            <person name="Collins F.S."/>
        </authorList>
    </citation>
    <scope>NUCLEOTIDE SEQUENCE [LARGE SCALE GENOMIC DNA]</scope>
    <source>
        <strain evidence="9">Brown Norway</strain>
    </source>
</reference>
<reference evidence="8" key="2">
    <citation type="submission" date="2005-07" db="EMBL/GenBank/DDBJ databases">
        <authorList>
            <person name="Mural R.J."/>
            <person name="Adams M.D."/>
            <person name="Myers E.W."/>
            <person name="Smith H.O."/>
            <person name="Venter J.C."/>
        </authorList>
    </citation>
    <scope>NUCLEOTIDE SEQUENCE [LARGE SCALE GENOMIC DNA]</scope>
</reference>
<reference evidence="11" key="3">
    <citation type="journal article" date="2012" name="Nat. Commun.">
        <title>Quantitative maps of protein phosphorylation sites across 14 different rat organs and tissues.</title>
        <authorList>
            <person name="Lundby A."/>
            <person name="Secher A."/>
            <person name="Lage K."/>
            <person name="Nordsborg N.B."/>
            <person name="Dmytriyev A."/>
            <person name="Lundby C."/>
            <person name="Olsen J.V."/>
        </authorList>
    </citation>
    <scope>IDENTIFICATION BY MASS SPECTROMETRY [LARGE SCALE ANALYSIS]</scope>
</reference>
<reference evidence="7" key="4">
    <citation type="journal article" date="2013" name="Biochem. Biophys. Res. Commun.">
        <title>Functional roles of BCAR3 in the signaling pathways of insulin leading to DNA synthesis, membrane ruffling and GLUT4 translocation.</title>
        <authorList>
            <person name="Oh M.J."/>
            <person name="Yi S.J."/>
            <person name="Kim H.S."/>
            <person name="Kim J.H."/>
            <person name="Jeong Y.H."/>
            <person name="van Agthoven T."/>
            <person name="Jhun B.H."/>
        </authorList>
    </citation>
    <scope>FUNCTION</scope>
    <scope>INTERACTION WITH BCAR1</scope>
</reference>
<accession>D3ZAZ5</accession>
<sequence>MAAGKFASLPRHMPVNHQFPLASSMDLLSSKSPLAEHRTEAYPDVSIHGTLPRKKKGPPPIRSCDSASHMGTLPHSKSPRQSSPLTQDLILEKPLPDWKGDSFAFRDPYLLDPTLEYVKFSKERHIMDRTPERLKKELEEELLLSSEDLRSHAWYHGRIPRQVSENLVQRDGDFLVRDSLSSPGNFVLTCQWKNLAQHFKINRTVLRLSEAYSRVQYQFEMESFDSIPGLVRCYVGNRRPISQQSGAIIFQPINRTVPLWCLEERYGTSPGRGREGSFAEGRPDVVKRLSLTTGGIQARDHSLPRGNLLRNKDKSGSQPACLDHVQDRKAATLKAHQSESHLPIGCKLPPQSPSVDTSPCPNSPVFRTGSEPTLSPALVRRFSSDARAGEALRGSDSQLCPKPPPKPCKVPFLKVPPSPSPWLNSEANYCELNPAFAVGCDRGAKLLSQALDSHEMLLTAKQNGASGPRNSGINYSILDGDDQGRHWDPLAVQTDEGQEDETKFVPPVMETVSSFRPNDFESKLLPPENKPLETAMLKHAKELFTNHDARVIAQHMLSVDCKVARILEVSEDMKRSMGVSSGLELITLPHGRQLRLDIIERHNTMAIGIAVDILGCTGTLENRAGTLNKIIQVAMELKDTMGDLYSFSAIMKALEMPQITRLEKTWTALRHHYTQTAILYEKQLKPFSKILHEGRESTYVPASSVSVPLLMPLVTLMERQAVTFEGTDMWEKNDESCEIMLSHLATARFMAEASESYRMNAERVLADFQPDEEMTEILKTEFQMRLLWGSKGAEVNQNERYDKFNQILTALSRKLEPPSGKQAEL</sequence>
<dbReference type="EMBL" id="AABR07013194">
    <property type="status" value="NOT_ANNOTATED_CDS"/>
    <property type="molecule type" value="Genomic_DNA"/>
</dbReference>
<dbReference type="EMBL" id="AABR07013195">
    <property type="status" value="NOT_ANNOTATED_CDS"/>
    <property type="molecule type" value="Genomic_DNA"/>
</dbReference>
<dbReference type="EMBL" id="AABR07013196">
    <property type="status" value="NOT_ANNOTATED_CDS"/>
    <property type="molecule type" value="Genomic_DNA"/>
</dbReference>
<dbReference type="EMBL" id="AABR07013197">
    <property type="status" value="NOT_ANNOTATED_CDS"/>
    <property type="molecule type" value="Genomic_DNA"/>
</dbReference>
<dbReference type="EMBL" id="AABR07013198">
    <property type="status" value="NOT_ANNOTATED_CDS"/>
    <property type="molecule type" value="Genomic_DNA"/>
</dbReference>
<dbReference type="EMBL" id="AABR07013199">
    <property type="status" value="NOT_ANNOTATED_CDS"/>
    <property type="molecule type" value="Genomic_DNA"/>
</dbReference>
<dbReference type="EMBL" id="AABR07013200">
    <property type="status" value="NOT_ANNOTATED_CDS"/>
    <property type="molecule type" value="Genomic_DNA"/>
</dbReference>
<dbReference type="EMBL" id="CH473952">
    <property type="protein sequence ID" value="EDL82101.1"/>
    <property type="molecule type" value="Genomic_DNA"/>
</dbReference>
<dbReference type="RefSeq" id="NP_001101192.1">
    <property type="nucleotide sequence ID" value="NM_001107722.1"/>
</dbReference>
<dbReference type="RefSeq" id="XP_038958370.1">
    <property type="nucleotide sequence ID" value="XM_039102442.2"/>
</dbReference>
<dbReference type="SMR" id="D3ZAZ5"/>
<dbReference type="FunCoup" id="D3ZAZ5">
    <property type="interactions" value="353"/>
</dbReference>
<dbReference type="STRING" id="10116.ENSRNOP00000062880"/>
<dbReference type="iPTMnet" id="D3ZAZ5"/>
<dbReference type="PhosphoSitePlus" id="D3ZAZ5"/>
<dbReference type="PaxDb" id="10116-ENSRNOP00000062880"/>
<dbReference type="PeptideAtlas" id="D3ZAZ5"/>
<dbReference type="Ensembl" id="ENSRNOT00000065111.2">
    <property type="protein sequence ID" value="ENSRNOP00000062880.1"/>
    <property type="gene ID" value="ENSRNOG00000013737.7"/>
</dbReference>
<dbReference type="GeneID" id="310838"/>
<dbReference type="KEGG" id="rno:310838"/>
<dbReference type="AGR" id="RGD:1311688"/>
<dbReference type="CTD" id="8412"/>
<dbReference type="RGD" id="1311688">
    <property type="gene designation" value="Bcar3"/>
</dbReference>
<dbReference type="eggNOG" id="ENOG502QPX3">
    <property type="taxonomic scope" value="Eukaryota"/>
</dbReference>
<dbReference type="GeneTree" id="ENSGT00940000154130"/>
<dbReference type="HOGENOM" id="CLU_015281_0_0_1"/>
<dbReference type="InParanoid" id="D3ZAZ5"/>
<dbReference type="OMA" id="MDPAMEY"/>
<dbReference type="OrthoDB" id="2412973at2759"/>
<dbReference type="TreeFam" id="TF323756"/>
<dbReference type="PRO" id="PR:D3ZAZ5"/>
<dbReference type="Proteomes" id="UP000002494">
    <property type="component" value="Chromosome 2"/>
</dbReference>
<dbReference type="Proteomes" id="UP000234681">
    <property type="component" value="Chromosome 2"/>
</dbReference>
<dbReference type="Bgee" id="ENSRNOG00000013737">
    <property type="expression patterns" value="Expressed in jejunum and 20 other cell types or tissues"/>
</dbReference>
<dbReference type="GO" id="GO:0005737">
    <property type="term" value="C:cytoplasm"/>
    <property type="evidence" value="ECO:0007669"/>
    <property type="project" value="UniProtKB-SubCell"/>
</dbReference>
<dbReference type="GO" id="GO:0005925">
    <property type="term" value="C:focal adhesion"/>
    <property type="evidence" value="ECO:0000250"/>
    <property type="project" value="UniProtKB"/>
</dbReference>
<dbReference type="GO" id="GO:0016020">
    <property type="term" value="C:membrane"/>
    <property type="evidence" value="ECO:0000250"/>
    <property type="project" value="UniProtKB"/>
</dbReference>
<dbReference type="GO" id="GO:0005085">
    <property type="term" value="F:guanyl-nucleotide exchange factor activity"/>
    <property type="evidence" value="ECO:0007669"/>
    <property type="project" value="UniProtKB-KW"/>
</dbReference>
<dbReference type="GO" id="GO:0019900">
    <property type="term" value="F:kinase binding"/>
    <property type="evidence" value="ECO:0000266"/>
    <property type="project" value="RGD"/>
</dbReference>
<dbReference type="GO" id="GO:0001784">
    <property type="term" value="F:phosphotyrosine residue binding"/>
    <property type="evidence" value="ECO:0000250"/>
    <property type="project" value="UniProtKB"/>
</dbReference>
<dbReference type="GO" id="GO:0086100">
    <property type="term" value="P:endothelin receptor signaling pathway"/>
    <property type="evidence" value="ECO:0000266"/>
    <property type="project" value="RGD"/>
</dbReference>
<dbReference type="GO" id="GO:0007173">
    <property type="term" value="P:epidermal growth factor receptor signaling pathway"/>
    <property type="evidence" value="ECO:0000266"/>
    <property type="project" value="RGD"/>
</dbReference>
<dbReference type="GO" id="GO:0008286">
    <property type="term" value="P:insulin receptor signaling pathway"/>
    <property type="evidence" value="ECO:0000250"/>
    <property type="project" value="UniProtKB"/>
</dbReference>
<dbReference type="GO" id="GO:0002089">
    <property type="term" value="P:lens morphogenesis in camera-type eye"/>
    <property type="evidence" value="ECO:0000266"/>
    <property type="project" value="RGD"/>
</dbReference>
<dbReference type="GO" id="GO:0008284">
    <property type="term" value="P:positive regulation of cell population proliferation"/>
    <property type="evidence" value="ECO:0000250"/>
    <property type="project" value="UniProtKB"/>
</dbReference>
<dbReference type="GO" id="GO:0043547">
    <property type="term" value="P:positive regulation of GTPase activity"/>
    <property type="evidence" value="ECO:0000250"/>
    <property type="project" value="UniProtKB"/>
</dbReference>
<dbReference type="GO" id="GO:0043410">
    <property type="term" value="P:positive regulation of MAPK cascade"/>
    <property type="evidence" value="ECO:0000266"/>
    <property type="project" value="RGD"/>
</dbReference>
<dbReference type="GO" id="GO:0007264">
    <property type="term" value="P:small GTPase-mediated signal transduction"/>
    <property type="evidence" value="ECO:0007669"/>
    <property type="project" value="InterPro"/>
</dbReference>
<dbReference type="CDD" id="cd10337">
    <property type="entry name" value="SH2_BCAR3"/>
    <property type="match status" value="1"/>
</dbReference>
<dbReference type="FunFam" id="1.10.840.10:FF:000007">
    <property type="entry name" value="SH2 domain containing 3C (Predicted)"/>
    <property type="match status" value="1"/>
</dbReference>
<dbReference type="FunFam" id="3.30.505.10:FF:000013">
    <property type="entry name" value="SH2 domain-containing protein 3C isoform X1"/>
    <property type="match status" value="1"/>
</dbReference>
<dbReference type="Gene3D" id="1.10.840.10">
    <property type="entry name" value="Ras guanine-nucleotide exchange factors catalytic domain"/>
    <property type="match status" value="1"/>
</dbReference>
<dbReference type="Gene3D" id="3.30.505.10">
    <property type="entry name" value="SH2 domain"/>
    <property type="match status" value="1"/>
</dbReference>
<dbReference type="InterPro" id="IPR023578">
    <property type="entry name" value="Ras_GEF_dom_sf"/>
</dbReference>
<dbReference type="InterPro" id="IPR001895">
    <property type="entry name" value="RASGEF_cat_dom"/>
</dbReference>
<dbReference type="InterPro" id="IPR036964">
    <property type="entry name" value="RASGEF_cat_dom_sf"/>
</dbReference>
<dbReference type="InterPro" id="IPR000980">
    <property type="entry name" value="SH2"/>
</dbReference>
<dbReference type="InterPro" id="IPR051853">
    <property type="entry name" value="SH2-Ras-GEF_adapter"/>
</dbReference>
<dbReference type="InterPro" id="IPR036860">
    <property type="entry name" value="SH2_dom_sf"/>
</dbReference>
<dbReference type="InterPro" id="IPR044102">
    <property type="entry name" value="SH2_SHEP1/BCAR3/NSP1"/>
</dbReference>
<dbReference type="PANTHER" id="PTHR14247:SF10">
    <property type="entry name" value="BREAST CANCER ANTI-ESTROGEN RESISTANCE PROTEIN 3"/>
    <property type="match status" value="1"/>
</dbReference>
<dbReference type="PANTHER" id="PTHR14247">
    <property type="entry name" value="BREAST CANCER ANTI-ESTROGEN RESISTANCE PROTEIN 3 HOMOLOG-LIKE PROTEIN"/>
    <property type="match status" value="1"/>
</dbReference>
<dbReference type="Pfam" id="PF00617">
    <property type="entry name" value="RasGEF"/>
    <property type="match status" value="1"/>
</dbReference>
<dbReference type="Pfam" id="PF00017">
    <property type="entry name" value="SH2"/>
    <property type="match status" value="1"/>
</dbReference>
<dbReference type="SMART" id="SM00147">
    <property type="entry name" value="RasGEF"/>
    <property type="match status" value="1"/>
</dbReference>
<dbReference type="SMART" id="SM00252">
    <property type="entry name" value="SH2"/>
    <property type="match status" value="1"/>
</dbReference>
<dbReference type="SUPFAM" id="SSF48366">
    <property type="entry name" value="Ras GEF"/>
    <property type="match status" value="1"/>
</dbReference>
<dbReference type="SUPFAM" id="SSF55550">
    <property type="entry name" value="SH2 domain"/>
    <property type="match status" value="1"/>
</dbReference>
<dbReference type="PROSITE" id="PS50009">
    <property type="entry name" value="RASGEF_CAT"/>
    <property type="match status" value="1"/>
</dbReference>
<dbReference type="PROSITE" id="PS50001">
    <property type="entry name" value="SH2"/>
    <property type="match status" value="1"/>
</dbReference>
<keyword id="KW-0007">Acetylation</keyword>
<keyword id="KW-0965">Cell junction</keyword>
<keyword id="KW-0963">Cytoplasm</keyword>
<keyword id="KW-0344">Guanine-nucleotide releasing factor</keyword>
<keyword id="KW-0488">Methylation</keyword>
<keyword id="KW-0597">Phosphoprotein</keyword>
<keyword id="KW-1185">Reference proteome</keyword>
<keyword id="KW-0727">SH2 domain</keyword>
<name>BCAR3_RAT</name>
<protein>
    <recommendedName>
        <fullName evidence="7">Breast cancer anti-estrogen resistance protein 3 homolog</fullName>
    </recommendedName>
    <alternativeName>
        <fullName evidence="7">BCAR3 adapter protein, NSP family member</fullName>
    </alternativeName>
    <alternativeName>
        <fullName evidence="7">Novel SH2-containing protein 2</fullName>
    </alternativeName>
    <alternativeName>
        <fullName evidence="7">SH2 domain-containing protein 3B</fullName>
    </alternativeName>
    <alternativeName>
        <fullName evidence="7">p130Cas-binding protein AND-34</fullName>
    </alternativeName>
</protein>
<comment type="function">
    <text evidence="1 2 6">Acts as an adapter protein downstream of several growth factor receptors to promote cell proliferation, migration, and redistribution of actin fibers (By similarity). Specifically involved in INS/insulin signaling pathway by mediating MAPK1/ERK2-MAPK3/ERK1 activation and DNA synthesis (PubMed:24216110). Promotes insulin-mediated membrane ruffling (PubMed:24216110). In response to vasoconstrictor peptide EDN1, involved in the activation of RAP1 downstream of PTK2B via interaction with phosphorylated BCAR1 (By similarity). Inhibits cell migration and invasion via regulation of TGFB-mediated matrix digestion, actin filament rearrangement, and inhibition of invadopodia activity (By similarity). May inhibit TGFB/SMAD signaling, via facilitating BCAR1 and SMAD2 and/or SMAD3 interaction (By similarity). Regulates EGF-induced DNA synthesis (By similarity). Required for the maintenance of ocular lens morphology and structural integrity, potentially via regulation of focal adhesion complex signaling (By similarity). Acts upstream of PTPRA to regulate the localization of BCAR1 and PTPRA to focal adhesions, via regulation of SRC-mediated phosphorylation of PTPRA (By similarity). Positively regulates integrin-induced tyrosine phosphorylation of BCAR1 (By similarity). Acts as a guanine nucleotide exchange factor (GEF) for small GTPases RALA, RAP1A and RRAS (By similarity). However, in a contrasting study, lacks GEF activity towards RAP1 (By similarity).</text>
</comment>
<comment type="subunit">
    <text evidence="1 2 6">Part of a complex comprised of PTPRA, BCAR1, BCAR3 and SRC; the formation of the complex is dependent on integrin mediated-tyrosine phosphorylation of PTPRA (By similarity). Within the complex, interacts (via SH2 domain) with PTPRA (when phosphorylated on 'Tyr-792') (By similarity). Interacts (via Ras-GEF domain) with BCAR1 (PubMed:24216110). Interacts (via Ras-GEF domain) with NEDD9 (By similarity). Interacts with PTK2/FAK1 (By similarity). Interacts with PTPN1. Interacts (via SH2 domain) with EGFR (when tyrosine-phosphorylated) (By similarity).</text>
</comment>
<comment type="subcellular location">
    <subcellularLocation>
        <location evidence="2">Cytoplasm</location>
    </subcellularLocation>
    <subcellularLocation>
        <location evidence="2">Cell junction</location>
        <location evidence="2">Focal adhesion</location>
    </subcellularLocation>
    <text evidence="2">Localization to focal adhesions depends on interaction with PTPRA.</text>
</comment>
<comment type="domain">
    <text evidence="1 2">The SH2 domain mediates interaction with tyrosine-phosphorylated proteins (By similarity). However, not involved in the binding to phosphorylated BCAR1 (By similarity). Required for cell cycle progression in response to INS/insulin (By similarity). Required for regulation of EGF-induced DNA synthesis (By similarity).</text>
</comment>
<comment type="domain">
    <text evidence="1">The Ras-GEF domain appears to adopt a closed conformation rendering it incapable of carrying out canonical exchange factor function, this closed conformation is probably required for interaction with BCAR1.</text>
</comment>
<comment type="PTM">
    <text evidence="2">Phosphorylated on tyrosine residues.</text>
</comment>
<comment type="caution">
    <text evidence="1 2">The guanine nucleotide exchange factor (GEF) activity is controversial. One study showed GEF activity towards RALA, RAP1A and RRAS (By similarity). However, in another study, a construct containing only the Ras-GEF domain lacks GEF activity towards RAP1 (By similarity).</text>
</comment>
<feature type="initiator methionine" description="Removed">
    <location>
        <position position="1"/>
    </location>
</feature>
<feature type="chain" id="PRO_0000449050" description="Breast cancer anti-estrogen resistance protein 3 homolog">
    <location>
        <begin position="2"/>
        <end position="825"/>
    </location>
</feature>
<feature type="domain" description="SH2" evidence="4">
    <location>
        <begin position="154"/>
        <end position="253"/>
    </location>
</feature>
<feature type="domain" description="Ras-GEF" evidence="3">
    <location>
        <begin position="548"/>
        <end position="818"/>
    </location>
</feature>
<feature type="region of interest" description="Disordered" evidence="5">
    <location>
        <begin position="40"/>
        <end position="84"/>
    </location>
</feature>
<feature type="region of interest" description="Disordered" evidence="5">
    <location>
        <begin position="300"/>
        <end position="320"/>
    </location>
</feature>
<feature type="region of interest" description="Mediates the interaction with BCAR1/p130CAS" evidence="1">
    <location>
        <begin position="744"/>
        <end position="748"/>
    </location>
</feature>
<feature type="site" description="Required for interaction with NEDD9" evidence="2">
    <location>
        <position position="748"/>
    </location>
</feature>
<feature type="modified residue" description="N-acetylalanine" evidence="1">
    <location>
        <position position="2"/>
    </location>
</feature>
<feature type="modified residue" description="Phosphoserine" evidence="1">
    <location>
        <position position="32"/>
    </location>
</feature>
<feature type="modified residue" description="Phosphoserine" evidence="1">
    <location>
        <position position="78"/>
    </location>
</feature>
<feature type="modified residue" description="Phosphoserine" evidence="1">
    <location>
        <position position="83"/>
    </location>
</feature>
<feature type="modified residue" description="Phosphoserine" evidence="1">
    <location>
        <position position="182"/>
    </location>
</feature>
<feature type="modified residue" description="Phosphoserine" evidence="1">
    <location>
        <position position="290"/>
    </location>
</feature>
<feature type="modified residue" description="N6-methyllysine" evidence="1">
    <location>
        <position position="334"/>
    </location>
</feature>
<feature type="modified residue" description="Phosphoserine" evidence="1">
    <location>
        <position position="358"/>
    </location>
</feature>
<feature type="modified residue" description="Phosphoserine" evidence="1">
    <location>
        <position position="363"/>
    </location>
</feature>
<feature type="modified residue" description="Phosphoserine" evidence="2">
    <location>
        <position position="375"/>
    </location>
</feature>
<feature type="modified residue" description="Omega-N-methylarginine" evidence="1">
    <location>
        <position position="442"/>
    </location>
</feature>
<feature type="modified residue" description="Phosphoserine" evidence="2">
    <location>
        <position position="471"/>
    </location>
</feature>
<evidence type="ECO:0000250" key="1">
    <source>
        <dbReference type="UniProtKB" id="O75815"/>
    </source>
</evidence>
<evidence type="ECO:0000250" key="2">
    <source>
        <dbReference type="UniProtKB" id="Q9QZK2"/>
    </source>
</evidence>
<evidence type="ECO:0000255" key="3">
    <source>
        <dbReference type="PROSITE-ProRule" id="PRU00168"/>
    </source>
</evidence>
<evidence type="ECO:0000255" key="4">
    <source>
        <dbReference type="PROSITE-ProRule" id="PRU00191"/>
    </source>
</evidence>
<evidence type="ECO:0000256" key="5">
    <source>
        <dbReference type="SAM" id="MobiDB-lite"/>
    </source>
</evidence>
<evidence type="ECO:0000269" key="6">
    <source>
    </source>
</evidence>
<evidence type="ECO:0000305" key="7"/>
<evidence type="ECO:0000312" key="8">
    <source>
        <dbReference type="EMBL" id="EDL82101.1"/>
    </source>
</evidence>
<evidence type="ECO:0000312" key="9">
    <source>
        <dbReference type="Proteomes" id="UP000002494"/>
    </source>
</evidence>
<evidence type="ECO:0000312" key="10">
    <source>
        <dbReference type="RGD" id="1311688"/>
    </source>
</evidence>
<evidence type="ECO:0007744" key="11">
    <source>
    </source>
</evidence>
<proteinExistence type="evidence at protein level"/>
<gene>
    <name evidence="10" type="primary">Bcar3</name>
</gene>
<organism evidence="9">
    <name type="scientific">Rattus norvegicus</name>
    <name type="common">Rat</name>
    <dbReference type="NCBI Taxonomy" id="10116"/>
    <lineage>
        <taxon>Eukaryota</taxon>
        <taxon>Metazoa</taxon>
        <taxon>Chordata</taxon>
        <taxon>Craniata</taxon>
        <taxon>Vertebrata</taxon>
        <taxon>Euteleostomi</taxon>
        <taxon>Mammalia</taxon>
        <taxon>Eutheria</taxon>
        <taxon>Euarchontoglires</taxon>
        <taxon>Glires</taxon>
        <taxon>Rodentia</taxon>
        <taxon>Myomorpha</taxon>
        <taxon>Muroidea</taxon>
        <taxon>Muridae</taxon>
        <taxon>Murinae</taxon>
        <taxon>Rattus</taxon>
    </lineage>
</organism>